<protein>
    <recommendedName>
        <fullName>Digeranylgeranylglycerophospholipid reductase</fullName>
        <shortName>DGGGPL reductase</shortName>
        <ecNumber evidence="5">1.3.-.-</ecNumber>
    </recommendedName>
    <alternativeName>
        <fullName>2,3-bis-O-geranylgeranylglyceryl phosphate reductase</fullName>
    </alternativeName>
    <alternativeName>
        <fullName>Geranylgeranyl reductase</fullName>
        <shortName>GGR</shortName>
    </alternativeName>
</protein>
<feature type="chain" id="PRO_0000428875" description="Digeranylgeranylglycerophospholipid reductase">
    <location>
        <begin position="1"/>
        <end position="410"/>
    </location>
</feature>
<feature type="binding site" evidence="2">
    <location>
        <position position="15"/>
    </location>
    <ligand>
        <name>FAD</name>
        <dbReference type="ChEBI" id="CHEBI:57692"/>
    </ligand>
</feature>
<feature type="binding site" evidence="2">
    <location>
        <position position="34"/>
    </location>
    <ligand>
        <name>FAD</name>
        <dbReference type="ChEBI" id="CHEBI:57692"/>
    </ligand>
</feature>
<feature type="binding site" evidence="2">
    <location>
        <position position="118"/>
    </location>
    <ligand>
        <name>FAD</name>
        <dbReference type="ChEBI" id="CHEBI:57692"/>
    </ligand>
</feature>
<feature type="binding site" evidence="2">
    <location>
        <position position="286"/>
    </location>
    <ligand>
        <name>FAD</name>
        <dbReference type="ChEBI" id="CHEBI:57692"/>
    </ligand>
</feature>
<feature type="binding site" evidence="2">
    <location>
        <position position="298"/>
    </location>
    <ligand>
        <name>FAD</name>
        <dbReference type="ChEBI" id="CHEBI:57692"/>
    </ligand>
</feature>
<feature type="binding site" evidence="2">
    <location>
        <position position="299"/>
    </location>
    <ligand>
        <name>FAD</name>
        <dbReference type="ChEBI" id="CHEBI:57692"/>
    </ligand>
</feature>
<feature type="binding site" evidence="2">
    <location>
        <position position="343"/>
    </location>
    <ligand>
        <name>a 2,3-bis-O-(geranylgeranyl)-sn-glycerol 1-phospholipid</name>
        <dbReference type="ChEBI" id="CHEBI:138140"/>
    </ligand>
</feature>
<feature type="binding site" evidence="2">
    <location>
        <position position="379"/>
    </location>
    <ligand>
        <name>a 2,3-bis-O-(geranylgeranyl)-sn-glycerol 1-phospholipid</name>
        <dbReference type="ChEBI" id="CHEBI:138140"/>
    </ligand>
</feature>
<keyword id="KW-0274">FAD</keyword>
<keyword id="KW-0285">Flavoprotein</keyword>
<keyword id="KW-0444">Lipid biosynthesis</keyword>
<keyword id="KW-0443">Lipid metabolism</keyword>
<keyword id="KW-0560">Oxidoreductase</keyword>
<keyword id="KW-0594">Phospholipid biosynthesis</keyword>
<keyword id="KW-1208">Phospholipid metabolism</keyword>
<keyword id="KW-1185">Reference proteome</keyword>
<gene>
    <name type="ordered locus">HVO_1799</name>
    <name type="ORF">C498_04308</name>
</gene>
<organism>
    <name type="scientific">Haloferax volcanii (strain ATCC 29605 / DSM 3757 / JCM 8879 / NBRC 14742 / NCIMB 2012 / VKM B-1768 / DS2)</name>
    <name type="common">Halobacterium volcanii</name>
    <dbReference type="NCBI Taxonomy" id="309800"/>
    <lineage>
        <taxon>Archaea</taxon>
        <taxon>Methanobacteriati</taxon>
        <taxon>Methanobacteriota</taxon>
        <taxon>Stenosarchaea group</taxon>
        <taxon>Halobacteria</taxon>
        <taxon>Halobacteriales</taxon>
        <taxon>Haloferacaceae</taxon>
        <taxon>Haloferax</taxon>
    </lineage>
</organism>
<accession>D4GSC3</accession>
<comment type="function">
    <text evidence="3">Is involved in the reduction of 2,3-digeranylgeranylglycerophospholipids (unsaturated archaeols) into 2,3-diphytanylglycerophospholipids (saturated archaeols) in the biosynthesis of archaeal membrane lipids. Can fully reduce the unsaturated isoprenoid side chains of membrane phospholipids and glycolipids. Is also able to reduce the omega-position isoprene of dolichol phosphate.</text>
</comment>
<comment type="catalytic activity">
    <reaction evidence="5">
        <text>a 2,3-bis-O-phytanyl-sn-glycerol 1-phospholipid + 8 A = a 2,3-bis-O-(geranylgeranyl)-sn-glycerol 1-phospholipid + 8 AH2</text>
        <dbReference type="Rhea" id="RHEA:64376"/>
        <dbReference type="ChEBI" id="CHEBI:13193"/>
        <dbReference type="ChEBI" id="CHEBI:17499"/>
        <dbReference type="ChEBI" id="CHEBI:138139"/>
        <dbReference type="ChEBI" id="CHEBI:138140"/>
    </reaction>
    <physiologicalReaction direction="right-to-left" evidence="5">
        <dbReference type="Rhea" id="RHEA:64378"/>
    </physiologicalReaction>
</comment>
<comment type="catalytic activity">
    <reaction evidence="4">
        <text>2,3-bis-O-(phytanyl)-sn-glycerol 1-phosphate + 8 A = 2,3-bis-O-(geranylgeranyl)-sn-glycerol 1-phosphate + 8 AH2</text>
        <dbReference type="Rhea" id="RHEA:64368"/>
        <dbReference type="ChEBI" id="CHEBI:13193"/>
        <dbReference type="ChEBI" id="CHEBI:17499"/>
        <dbReference type="ChEBI" id="CHEBI:58837"/>
        <dbReference type="ChEBI" id="CHEBI:73125"/>
    </reaction>
    <physiologicalReaction direction="right-to-left" evidence="4">
        <dbReference type="Rhea" id="RHEA:64370"/>
    </physiologicalReaction>
</comment>
<comment type="catalytic activity">
    <reaction evidence="4">
        <text>CDP-2,3-bis-O-(geranylgeranyl)-sn-glycerol + 8 AH2 = CDP-2,3-bis-O-(phytanyl)-sn-glycerol + 8 A</text>
        <dbReference type="Rhea" id="RHEA:84207"/>
        <dbReference type="ChEBI" id="CHEBI:13193"/>
        <dbReference type="ChEBI" id="CHEBI:17499"/>
        <dbReference type="ChEBI" id="CHEBI:58838"/>
        <dbReference type="ChEBI" id="CHEBI:74004"/>
    </reaction>
    <physiologicalReaction direction="left-to-right" evidence="4">
        <dbReference type="Rhea" id="RHEA:84208"/>
    </physiologicalReaction>
</comment>
<comment type="catalytic activity">
    <reaction evidence="4">
        <text>archaetidylserine + 8 AH2 = 2,3-bis-O-phytanyl-sn-glycero-3-phospho-L-serine + 8 A</text>
        <dbReference type="Rhea" id="RHEA:84215"/>
        <dbReference type="ChEBI" id="CHEBI:13193"/>
        <dbReference type="ChEBI" id="CHEBI:17499"/>
        <dbReference type="ChEBI" id="CHEBI:71517"/>
        <dbReference type="ChEBI" id="CHEBI:74853"/>
    </reaction>
    <physiologicalReaction direction="left-to-right" evidence="4">
        <dbReference type="Rhea" id="RHEA:84216"/>
    </physiologicalReaction>
</comment>
<comment type="cofactor">
    <cofactor evidence="1">
        <name>FAD</name>
        <dbReference type="ChEBI" id="CHEBI:57692"/>
    </cofactor>
    <text evidence="1">Binds 1 FAD per subunit.</text>
</comment>
<comment type="pathway">
    <text>Membrane lipid metabolism; glycerophospholipid metabolism.</text>
</comment>
<comment type="disruption phenotype">
    <text evidence="3">Reduced pigmentation of cell colonies and lack of fully reduced isoprene chains of membrane phospholipids and glycolipids.</text>
</comment>
<comment type="similarity">
    <text evidence="4">Belongs to the geranylgeranyl reductase family. DGGGPL reductase subfamily.</text>
</comment>
<name>GGR_HALVD</name>
<proteinExistence type="inferred from homology"/>
<dbReference type="EC" id="1.3.-.-" evidence="5"/>
<dbReference type="EMBL" id="CP001956">
    <property type="protein sequence ID" value="ADE03171.1"/>
    <property type="molecule type" value="Genomic_DNA"/>
</dbReference>
<dbReference type="EMBL" id="AOHU01000033">
    <property type="protein sequence ID" value="ELY35164.1"/>
    <property type="molecule type" value="Genomic_DNA"/>
</dbReference>
<dbReference type="RefSeq" id="WP_004041683.1">
    <property type="nucleotide sequence ID" value="NC_013967.1"/>
</dbReference>
<dbReference type="SMR" id="D4GSC3"/>
<dbReference type="STRING" id="309800.HVO_1799"/>
<dbReference type="PaxDb" id="309800-C498_04308"/>
<dbReference type="EnsemblBacteria" id="ADE03171">
    <property type="protein sequence ID" value="ADE03171"/>
    <property type="gene ID" value="HVO_1799"/>
</dbReference>
<dbReference type="GeneID" id="8923972"/>
<dbReference type="KEGG" id="hvo:HVO_1799"/>
<dbReference type="PATRIC" id="fig|309800.29.peg.838"/>
<dbReference type="eggNOG" id="arCOG00570">
    <property type="taxonomic scope" value="Archaea"/>
</dbReference>
<dbReference type="HOGENOM" id="CLU_664998_0_0_2"/>
<dbReference type="OrthoDB" id="6062at2157"/>
<dbReference type="BRENDA" id="1.3.99.B15">
    <property type="organism ID" value="2561"/>
</dbReference>
<dbReference type="UniPathway" id="UPA00940"/>
<dbReference type="Proteomes" id="UP000008243">
    <property type="component" value="Chromosome"/>
</dbReference>
<dbReference type="Proteomes" id="UP000011532">
    <property type="component" value="Unassembled WGS sequence"/>
</dbReference>
<dbReference type="GO" id="GO:0016491">
    <property type="term" value="F:oxidoreductase activity"/>
    <property type="evidence" value="ECO:0007669"/>
    <property type="project" value="UniProtKB-KW"/>
</dbReference>
<dbReference type="GO" id="GO:0006650">
    <property type="term" value="P:glycerophospholipid metabolic process"/>
    <property type="evidence" value="ECO:0007669"/>
    <property type="project" value="UniProtKB-UniPathway"/>
</dbReference>
<dbReference type="GO" id="GO:0008654">
    <property type="term" value="P:phospholipid biosynthetic process"/>
    <property type="evidence" value="ECO:0007669"/>
    <property type="project" value="UniProtKB-KW"/>
</dbReference>
<dbReference type="Gene3D" id="3.50.50.60">
    <property type="entry name" value="FAD/NAD(P)-binding domain"/>
    <property type="match status" value="1"/>
</dbReference>
<dbReference type="InterPro" id="IPR054884">
    <property type="entry name" value="Dggglyphlred_Halo"/>
</dbReference>
<dbReference type="InterPro" id="IPR036188">
    <property type="entry name" value="FAD/NAD-bd_sf"/>
</dbReference>
<dbReference type="InterPro" id="IPR050407">
    <property type="entry name" value="Geranylgeranyl_reductase"/>
</dbReference>
<dbReference type="InterPro" id="IPR054715">
    <property type="entry name" value="GGR_cat"/>
</dbReference>
<dbReference type="NCBIfam" id="NF041385">
    <property type="entry name" value="Dggglyphlred_Halo"/>
    <property type="match status" value="1"/>
</dbReference>
<dbReference type="PANTHER" id="PTHR42685:SF18">
    <property type="entry name" value="DIGERANYLGERANYLGLYCEROPHOSPHOLIPID REDUCTASE"/>
    <property type="match status" value="1"/>
</dbReference>
<dbReference type="PANTHER" id="PTHR42685">
    <property type="entry name" value="GERANYLGERANYL DIPHOSPHATE REDUCTASE"/>
    <property type="match status" value="1"/>
</dbReference>
<dbReference type="Pfam" id="PF12831">
    <property type="entry name" value="FAD_oxidored"/>
    <property type="match status" value="1"/>
</dbReference>
<dbReference type="Pfam" id="PF22578">
    <property type="entry name" value="GGR_cat"/>
    <property type="match status" value="1"/>
</dbReference>
<dbReference type="SUPFAM" id="SSF51905">
    <property type="entry name" value="FAD/NAD(P)-binding domain"/>
    <property type="match status" value="1"/>
</dbReference>
<reference key="1">
    <citation type="journal article" date="2010" name="PLoS ONE">
        <title>The complete genome sequence of Haloferax volcanii DS2, a model archaeon.</title>
        <authorList>
            <person name="Hartman A.L."/>
            <person name="Norais C."/>
            <person name="Badger J.H."/>
            <person name="Delmas S."/>
            <person name="Haldenby S."/>
            <person name="Madupu R."/>
            <person name="Robinson J."/>
            <person name="Khouri H."/>
            <person name="Ren Q."/>
            <person name="Lowe T.M."/>
            <person name="Maupin-Furlow J."/>
            <person name="Pohlschroder M."/>
            <person name="Daniels C."/>
            <person name="Pfeiffer F."/>
            <person name="Allers T."/>
            <person name="Eisen J.A."/>
        </authorList>
    </citation>
    <scope>NUCLEOTIDE SEQUENCE [LARGE SCALE GENOMIC DNA]</scope>
    <source>
        <strain>ATCC 29605 / DSM 3757 / JCM 8879 / NBRC 14742 / NCIMB 2012 / VKM B-1768 / DS2</strain>
    </source>
</reference>
<reference key="2">
    <citation type="journal article" date="2014" name="PLoS Genet.">
        <title>Phylogenetically driven sequencing of extremely halophilic archaea reveals strategies for static and dynamic osmo-response.</title>
        <authorList>
            <person name="Becker E.A."/>
            <person name="Seitzer P.M."/>
            <person name="Tritt A."/>
            <person name="Larsen D."/>
            <person name="Krusor M."/>
            <person name="Yao A.I."/>
            <person name="Wu D."/>
            <person name="Madern D."/>
            <person name="Eisen J.A."/>
            <person name="Darling A.E."/>
            <person name="Facciotti M.T."/>
        </authorList>
    </citation>
    <scope>NUCLEOTIDE SEQUENCE [LARGE SCALE GENOMIC DNA]</scope>
    <source>
        <strain>ATCC 29605 / DSM 3757 / JCM 8879 / NBRC 14742 / NCIMB 2012 / VKM B-1768 / DS2</strain>
    </source>
</reference>
<reference key="3">
    <citation type="journal article" date="2012" name="Biochim. Biophys. Acta">
        <title>A predicted geranylgeranyl reductase reduces the omega-position isoprene of dolichol phosphate in the halophilic archaeon, Haloferax volcanii.</title>
        <authorList>
            <person name="Naparstek S."/>
            <person name="Guan Z."/>
            <person name="Eichler J."/>
        </authorList>
    </citation>
    <scope>FUNCTION</scope>
    <scope>DISRUPTION PHENOTYPE</scope>
    <source>
        <strain>WR536</strain>
    </source>
</reference>
<sequence length="410" mass="45449">MTDNYDVIIAGAGPAGGQAARDLAARGYDVCVLETESEDEFPSRSNKSTAGTFPSTMASFNIPDEVVMNFTDDVVLESPNDHYHRHQPGAVLEFADFKNWLVDEAEADGAEYRFDARVSKPIMEGGEIVGVRYNGDEEVYADIVIDATGPSAPLAKALDLCDLRREKQAIGIEYEFEGMDLAPDGYGDLTDAMMLRLDHDIAPGGYSWIFHTGGDTAKVGVCYIQNEGHRHNAKSGYTIDDYLQYWTESDPRFADAERIAGKQHRGSAHIQLPGRMSTDNFMAIGDTVPTVDPLWGEGIDKCMRSGRVAAATADRALTNSERDTSASELAIYDQLWHDRVAPKVKNRLFMTEMLYRASNERYDKLLEDLHRLPDEQLDAANGGSPLAMFRMLKFEDLSILASTAKDWFSN</sequence>
<evidence type="ECO:0000250" key="1"/>
<evidence type="ECO:0000250" key="2">
    <source>
        <dbReference type="UniProtKB" id="Q9HKS9"/>
    </source>
</evidence>
<evidence type="ECO:0000269" key="3">
    <source>
    </source>
</evidence>
<evidence type="ECO:0000305" key="4"/>
<evidence type="ECO:0000305" key="5">
    <source>
    </source>
</evidence>